<proteinExistence type="inferred from homology"/>
<protein>
    <recommendedName>
        <fullName evidence="1">Glycerol-3-phosphate dehydrogenase [NAD(P)+]</fullName>
        <ecNumber evidence="1">1.1.1.94</ecNumber>
    </recommendedName>
    <alternativeName>
        <fullName evidence="1">NAD(P)(+)-dependent glycerol-3-phosphate dehydrogenase</fullName>
    </alternativeName>
    <alternativeName>
        <fullName evidence="1">NAD(P)H-dependent dihydroxyacetone-phosphate reductase</fullName>
    </alternativeName>
</protein>
<feature type="chain" id="PRO_1000049537" description="Glycerol-3-phosphate dehydrogenase [NAD(P)+]">
    <location>
        <begin position="1"/>
        <end position="341"/>
    </location>
</feature>
<feature type="active site" description="Proton acceptor" evidence="1">
    <location>
        <position position="191"/>
    </location>
</feature>
<feature type="binding site" evidence="1">
    <location>
        <position position="14"/>
    </location>
    <ligand>
        <name>NADPH</name>
        <dbReference type="ChEBI" id="CHEBI:57783"/>
    </ligand>
</feature>
<feature type="binding site" evidence="1">
    <location>
        <position position="15"/>
    </location>
    <ligand>
        <name>NADPH</name>
        <dbReference type="ChEBI" id="CHEBI:57783"/>
    </ligand>
</feature>
<feature type="binding site" evidence="1">
    <location>
        <position position="35"/>
    </location>
    <ligand>
        <name>NADPH</name>
        <dbReference type="ChEBI" id="CHEBI:57783"/>
    </ligand>
</feature>
<feature type="binding site" evidence="1">
    <location>
        <position position="108"/>
    </location>
    <ligand>
        <name>NADPH</name>
        <dbReference type="ChEBI" id="CHEBI:57783"/>
    </ligand>
</feature>
<feature type="binding site" evidence="1">
    <location>
        <position position="108"/>
    </location>
    <ligand>
        <name>sn-glycerol 3-phosphate</name>
        <dbReference type="ChEBI" id="CHEBI:57597"/>
    </ligand>
</feature>
<feature type="binding site" evidence="1">
    <location>
        <position position="136"/>
    </location>
    <ligand>
        <name>sn-glycerol 3-phosphate</name>
        <dbReference type="ChEBI" id="CHEBI:57597"/>
    </ligand>
</feature>
<feature type="binding site" evidence="1">
    <location>
        <position position="140"/>
    </location>
    <ligand>
        <name>NADPH</name>
        <dbReference type="ChEBI" id="CHEBI:57783"/>
    </ligand>
</feature>
<feature type="binding site" evidence="1">
    <location>
        <position position="191"/>
    </location>
    <ligand>
        <name>sn-glycerol 3-phosphate</name>
        <dbReference type="ChEBI" id="CHEBI:57597"/>
    </ligand>
</feature>
<feature type="binding site" evidence="1">
    <location>
        <position position="244"/>
    </location>
    <ligand>
        <name>sn-glycerol 3-phosphate</name>
        <dbReference type="ChEBI" id="CHEBI:57597"/>
    </ligand>
</feature>
<feature type="binding site" evidence="1">
    <location>
        <position position="254"/>
    </location>
    <ligand>
        <name>sn-glycerol 3-phosphate</name>
        <dbReference type="ChEBI" id="CHEBI:57597"/>
    </ligand>
</feature>
<feature type="binding site" evidence="1">
    <location>
        <position position="255"/>
    </location>
    <ligand>
        <name>NADPH</name>
        <dbReference type="ChEBI" id="CHEBI:57783"/>
    </ligand>
</feature>
<feature type="binding site" evidence="1">
    <location>
        <position position="255"/>
    </location>
    <ligand>
        <name>sn-glycerol 3-phosphate</name>
        <dbReference type="ChEBI" id="CHEBI:57597"/>
    </ligand>
</feature>
<feature type="binding site" evidence="1">
    <location>
        <position position="256"/>
    </location>
    <ligand>
        <name>sn-glycerol 3-phosphate</name>
        <dbReference type="ChEBI" id="CHEBI:57597"/>
    </ligand>
</feature>
<feature type="binding site" evidence="1">
    <location>
        <position position="279"/>
    </location>
    <ligand>
        <name>NADPH</name>
        <dbReference type="ChEBI" id="CHEBI:57783"/>
    </ligand>
</feature>
<feature type="binding site" evidence="1">
    <location>
        <position position="281"/>
    </location>
    <ligand>
        <name>NADPH</name>
        <dbReference type="ChEBI" id="CHEBI:57783"/>
    </ligand>
</feature>
<keyword id="KW-0963">Cytoplasm</keyword>
<keyword id="KW-0444">Lipid biosynthesis</keyword>
<keyword id="KW-0443">Lipid metabolism</keyword>
<keyword id="KW-0520">NAD</keyword>
<keyword id="KW-0521">NADP</keyword>
<keyword id="KW-0547">Nucleotide-binding</keyword>
<keyword id="KW-0560">Oxidoreductase</keyword>
<keyword id="KW-0594">Phospholipid biosynthesis</keyword>
<keyword id="KW-1208">Phospholipid metabolism</keyword>
<comment type="function">
    <text evidence="1">Catalyzes the reduction of the glycolytic intermediate dihydroxyacetone phosphate (DHAP) to sn-glycerol 3-phosphate (G3P), the key precursor for phospholipid synthesis.</text>
</comment>
<comment type="catalytic activity">
    <reaction evidence="1">
        <text>sn-glycerol 3-phosphate + NAD(+) = dihydroxyacetone phosphate + NADH + H(+)</text>
        <dbReference type="Rhea" id="RHEA:11092"/>
        <dbReference type="ChEBI" id="CHEBI:15378"/>
        <dbReference type="ChEBI" id="CHEBI:57540"/>
        <dbReference type="ChEBI" id="CHEBI:57597"/>
        <dbReference type="ChEBI" id="CHEBI:57642"/>
        <dbReference type="ChEBI" id="CHEBI:57945"/>
        <dbReference type="EC" id="1.1.1.94"/>
    </reaction>
    <physiologicalReaction direction="right-to-left" evidence="1">
        <dbReference type="Rhea" id="RHEA:11094"/>
    </physiologicalReaction>
</comment>
<comment type="catalytic activity">
    <reaction evidence="1">
        <text>sn-glycerol 3-phosphate + NADP(+) = dihydroxyacetone phosphate + NADPH + H(+)</text>
        <dbReference type="Rhea" id="RHEA:11096"/>
        <dbReference type="ChEBI" id="CHEBI:15378"/>
        <dbReference type="ChEBI" id="CHEBI:57597"/>
        <dbReference type="ChEBI" id="CHEBI:57642"/>
        <dbReference type="ChEBI" id="CHEBI:57783"/>
        <dbReference type="ChEBI" id="CHEBI:58349"/>
        <dbReference type="EC" id="1.1.1.94"/>
    </reaction>
    <physiologicalReaction direction="right-to-left" evidence="1">
        <dbReference type="Rhea" id="RHEA:11098"/>
    </physiologicalReaction>
</comment>
<comment type="pathway">
    <text evidence="1">Membrane lipid metabolism; glycerophospholipid metabolism.</text>
</comment>
<comment type="subcellular location">
    <subcellularLocation>
        <location evidence="1">Cytoplasm</location>
    </subcellularLocation>
</comment>
<comment type="similarity">
    <text evidence="1">Belongs to the NAD-dependent glycerol-3-phosphate dehydrogenase family.</text>
</comment>
<sequence>MTEQQPVAVLGGGSFGTAVANLLAENGHPVRQWMRDPAQAESMRVNRENPRYLKGIRLHDGVQPVNDLLATLQGSELIFVALPSSALRSVLAPHAELLRGKGLVSLTKGIEAHTFKLMSQILEEIAPEARIGVLSGPNLAREIAEHALTATVVASEDEALCRQVQEVLHGRTFRVYASTDRFGVELGGALKNVYAIIAGMAVALGMGENTKSMLITRALAEMTRFAVSQGANPMTFLGLAGVGDLIVTCSSPKSRNYQVGHALGQGLTLEEAVSRLGEVAEGVNTLKVLKAKAQEVQVYMPLVAGLHAILFEGRTLNQVIEHLMRAEPKTDVDFISTSGFN</sequence>
<name>GPDA_PSEE4</name>
<accession>Q1I7N0</accession>
<reference key="1">
    <citation type="journal article" date="2006" name="Nat. Biotechnol.">
        <title>Complete genome sequence of the entomopathogenic and metabolically versatile soil bacterium Pseudomonas entomophila.</title>
        <authorList>
            <person name="Vodovar N."/>
            <person name="Vallenet D."/>
            <person name="Cruveiller S."/>
            <person name="Rouy Z."/>
            <person name="Barbe V."/>
            <person name="Acosta C."/>
            <person name="Cattolico L."/>
            <person name="Jubin C."/>
            <person name="Lajus A."/>
            <person name="Segurens B."/>
            <person name="Vacherie B."/>
            <person name="Wincker P."/>
            <person name="Weissenbach J."/>
            <person name="Lemaitre B."/>
            <person name="Medigue C."/>
            <person name="Boccard F."/>
        </authorList>
    </citation>
    <scope>NUCLEOTIDE SEQUENCE [LARGE SCALE GENOMIC DNA]</scope>
    <source>
        <strain>L48</strain>
    </source>
</reference>
<evidence type="ECO:0000255" key="1">
    <source>
        <dbReference type="HAMAP-Rule" id="MF_00394"/>
    </source>
</evidence>
<organism>
    <name type="scientific">Pseudomonas entomophila (strain L48)</name>
    <dbReference type="NCBI Taxonomy" id="384676"/>
    <lineage>
        <taxon>Bacteria</taxon>
        <taxon>Pseudomonadati</taxon>
        <taxon>Pseudomonadota</taxon>
        <taxon>Gammaproteobacteria</taxon>
        <taxon>Pseudomonadales</taxon>
        <taxon>Pseudomonadaceae</taxon>
        <taxon>Pseudomonas</taxon>
    </lineage>
</organism>
<gene>
    <name evidence="1" type="primary">gpsA</name>
    <name type="ordered locus">PSEEN3618</name>
</gene>
<dbReference type="EC" id="1.1.1.94" evidence="1"/>
<dbReference type="EMBL" id="CT573326">
    <property type="protein sequence ID" value="CAK16349.1"/>
    <property type="molecule type" value="Genomic_DNA"/>
</dbReference>
<dbReference type="RefSeq" id="WP_011534732.1">
    <property type="nucleotide sequence ID" value="NC_008027.1"/>
</dbReference>
<dbReference type="SMR" id="Q1I7N0"/>
<dbReference type="STRING" id="384676.PSEEN3618"/>
<dbReference type="GeneID" id="32806682"/>
<dbReference type="KEGG" id="pen:PSEEN3618"/>
<dbReference type="eggNOG" id="COG0240">
    <property type="taxonomic scope" value="Bacteria"/>
</dbReference>
<dbReference type="HOGENOM" id="CLU_033449_0_2_6"/>
<dbReference type="OrthoDB" id="9812273at2"/>
<dbReference type="UniPathway" id="UPA00940"/>
<dbReference type="Proteomes" id="UP000000658">
    <property type="component" value="Chromosome"/>
</dbReference>
<dbReference type="GO" id="GO:0005829">
    <property type="term" value="C:cytosol"/>
    <property type="evidence" value="ECO:0007669"/>
    <property type="project" value="TreeGrafter"/>
</dbReference>
<dbReference type="GO" id="GO:0047952">
    <property type="term" value="F:glycerol-3-phosphate dehydrogenase [NAD(P)+] activity"/>
    <property type="evidence" value="ECO:0007669"/>
    <property type="project" value="UniProtKB-UniRule"/>
</dbReference>
<dbReference type="GO" id="GO:0051287">
    <property type="term" value="F:NAD binding"/>
    <property type="evidence" value="ECO:0007669"/>
    <property type="project" value="InterPro"/>
</dbReference>
<dbReference type="GO" id="GO:0005975">
    <property type="term" value="P:carbohydrate metabolic process"/>
    <property type="evidence" value="ECO:0007669"/>
    <property type="project" value="InterPro"/>
</dbReference>
<dbReference type="GO" id="GO:0046167">
    <property type="term" value="P:glycerol-3-phosphate biosynthetic process"/>
    <property type="evidence" value="ECO:0007669"/>
    <property type="project" value="UniProtKB-UniRule"/>
</dbReference>
<dbReference type="GO" id="GO:0046168">
    <property type="term" value="P:glycerol-3-phosphate catabolic process"/>
    <property type="evidence" value="ECO:0007669"/>
    <property type="project" value="InterPro"/>
</dbReference>
<dbReference type="GO" id="GO:0046474">
    <property type="term" value="P:glycerophospholipid biosynthetic process"/>
    <property type="evidence" value="ECO:0007669"/>
    <property type="project" value="TreeGrafter"/>
</dbReference>
<dbReference type="FunFam" id="1.10.1040.10:FF:000001">
    <property type="entry name" value="Glycerol-3-phosphate dehydrogenase [NAD(P)+]"/>
    <property type="match status" value="1"/>
</dbReference>
<dbReference type="FunFam" id="3.40.50.720:FF:000019">
    <property type="entry name" value="Glycerol-3-phosphate dehydrogenase [NAD(P)+]"/>
    <property type="match status" value="1"/>
</dbReference>
<dbReference type="Gene3D" id="1.10.1040.10">
    <property type="entry name" value="N-(1-d-carboxylethyl)-l-norvaline Dehydrogenase, domain 2"/>
    <property type="match status" value="1"/>
</dbReference>
<dbReference type="Gene3D" id="3.40.50.720">
    <property type="entry name" value="NAD(P)-binding Rossmann-like Domain"/>
    <property type="match status" value="1"/>
</dbReference>
<dbReference type="HAMAP" id="MF_00394">
    <property type="entry name" value="NAD_Glyc3P_dehydrog"/>
    <property type="match status" value="1"/>
</dbReference>
<dbReference type="InterPro" id="IPR008927">
    <property type="entry name" value="6-PGluconate_DH-like_C_sf"/>
</dbReference>
<dbReference type="InterPro" id="IPR013328">
    <property type="entry name" value="6PGD_dom2"/>
</dbReference>
<dbReference type="InterPro" id="IPR006168">
    <property type="entry name" value="G3P_DH_NAD-dep"/>
</dbReference>
<dbReference type="InterPro" id="IPR006109">
    <property type="entry name" value="G3P_DH_NAD-dep_C"/>
</dbReference>
<dbReference type="InterPro" id="IPR011128">
    <property type="entry name" value="G3P_DH_NAD-dep_N"/>
</dbReference>
<dbReference type="InterPro" id="IPR036291">
    <property type="entry name" value="NAD(P)-bd_dom_sf"/>
</dbReference>
<dbReference type="NCBIfam" id="NF000940">
    <property type="entry name" value="PRK00094.1-2"/>
    <property type="match status" value="1"/>
</dbReference>
<dbReference type="NCBIfam" id="NF000942">
    <property type="entry name" value="PRK00094.1-4"/>
    <property type="match status" value="1"/>
</dbReference>
<dbReference type="NCBIfam" id="NF000946">
    <property type="entry name" value="PRK00094.2-4"/>
    <property type="match status" value="1"/>
</dbReference>
<dbReference type="PANTHER" id="PTHR11728">
    <property type="entry name" value="GLYCEROL-3-PHOSPHATE DEHYDROGENASE"/>
    <property type="match status" value="1"/>
</dbReference>
<dbReference type="PANTHER" id="PTHR11728:SF1">
    <property type="entry name" value="GLYCEROL-3-PHOSPHATE DEHYDROGENASE [NAD(+)] 2, CHLOROPLASTIC"/>
    <property type="match status" value="1"/>
</dbReference>
<dbReference type="Pfam" id="PF07479">
    <property type="entry name" value="NAD_Gly3P_dh_C"/>
    <property type="match status" value="1"/>
</dbReference>
<dbReference type="Pfam" id="PF01210">
    <property type="entry name" value="NAD_Gly3P_dh_N"/>
    <property type="match status" value="1"/>
</dbReference>
<dbReference type="PIRSF" id="PIRSF000114">
    <property type="entry name" value="Glycerol-3-P_dh"/>
    <property type="match status" value="1"/>
</dbReference>
<dbReference type="PRINTS" id="PR00077">
    <property type="entry name" value="GPDHDRGNASE"/>
</dbReference>
<dbReference type="SUPFAM" id="SSF48179">
    <property type="entry name" value="6-phosphogluconate dehydrogenase C-terminal domain-like"/>
    <property type="match status" value="1"/>
</dbReference>
<dbReference type="SUPFAM" id="SSF51735">
    <property type="entry name" value="NAD(P)-binding Rossmann-fold domains"/>
    <property type="match status" value="1"/>
</dbReference>
<dbReference type="PROSITE" id="PS00957">
    <property type="entry name" value="NAD_G3PDH"/>
    <property type="match status" value="1"/>
</dbReference>